<name>KDSA_SHISS</name>
<evidence type="ECO:0000255" key="1">
    <source>
        <dbReference type="HAMAP-Rule" id="MF_00056"/>
    </source>
</evidence>
<reference key="1">
    <citation type="journal article" date="2005" name="Nucleic Acids Res.">
        <title>Genome dynamics and diversity of Shigella species, the etiologic agents of bacillary dysentery.</title>
        <authorList>
            <person name="Yang F."/>
            <person name="Yang J."/>
            <person name="Zhang X."/>
            <person name="Chen L."/>
            <person name="Jiang Y."/>
            <person name="Yan Y."/>
            <person name="Tang X."/>
            <person name="Wang J."/>
            <person name="Xiong Z."/>
            <person name="Dong J."/>
            <person name="Xue Y."/>
            <person name="Zhu Y."/>
            <person name="Xu X."/>
            <person name="Sun L."/>
            <person name="Chen S."/>
            <person name="Nie H."/>
            <person name="Peng J."/>
            <person name="Xu J."/>
            <person name="Wang Y."/>
            <person name="Yuan Z."/>
            <person name="Wen Y."/>
            <person name="Yao Z."/>
            <person name="Shen Y."/>
            <person name="Qiang B."/>
            <person name="Hou Y."/>
            <person name="Yu J."/>
            <person name="Jin Q."/>
        </authorList>
    </citation>
    <scope>NUCLEOTIDE SEQUENCE [LARGE SCALE GENOMIC DNA]</scope>
    <source>
        <strain>Ss046</strain>
    </source>
</reference>
<feature type="chain" id="PRO_0000304494" description="2-dehydro-3-deoxyphosphooctonate aldolase">
    <location>
        <begin position="1"/>
        <end position="284"/>
    </location>
</feature>
<comment type="catalytic activity">
    <reaction evidence="1">
        <text>D-arabinose 5-phosphate + phosphoenolpyruvate + H2O = 3-deoxy-alpha-D-manno-2-octulosonate-8-phosphate + phosphate</text>
        <dbReference type="Rhea" id="RHEA:14053"/>
        <dbReference type="ChEBI" id="CHEBI:15377"/>
        <dbReference type="ChEBI" id="CHEBI:43474"/>
        <dbReference type="ChEBI" id="CHEBI:57693"/>
        <dbReference type="ChEBI" id="CHEBI:58702"/>
        <dbReference type="ChEBI" id="CHEBI:85985"/>
        <dbReference type="EC" id="2.5.1.55"/>
    </reaction>
</comment>
<comment type="pathway">
    <text evidence="1">Carbohydrate biosynthesis; 3-deoxy-D-manno-octulosonate biosynthesis; 3-deoxy-D-manno-octulosonate from D-ribulose 5-phosphate: step 2/3.</text>
</comment>
<comment type="pathway">
    <text evidence="1">Bacterial outer membrane biogenesis; lipopolysaccharide biosynthesis.</text>
</comment>
<comment type="subcellular location">
    <subcellularLocation>
        <location evidence="1">Cytoplasm</location>
    </subcellularLocation>
</comment>
<comment type="similarity">
    <text evidence="1">Belongs to the KdsA family.</text>
</comment>
<accession>Q3Z0T2</accession>
<sequence>MKQKVVSIGDINVANDLPFVLFGGMNVLESRDLAMRICEHYVTVTQKLGIPYVFKASFDKANRSSIHSYRGPGLEEGMKIFQELKQTFGVKIITDVHEPSQAQPVADVVDVIQLPAFLARQTDLVEAMAKTGAVINVKKPQFVSPGQMGNIVDKFKEGGNEKVILCDRGANFGYDNLVVDMLGFSIMKKVSGNSPVIFDVTHALQCRDPFGAASGGRRAQVAELARAGMAVGLAGLFIEAHPDPEHAKCDGPSALPLAKLEPFLKQMKAIDDLVKGFEELDTSK</sequence>
<organism>
    <name type="scientific">Shigella sonnei (strain Ss046)</name>
    <dbReference type="NCBI Taxonomy" id="300269"/>
    <lineage>
        <taxon>Bacteria</taxon>
        <taxon>Pseudomonadati</taxon>
        <taxon>Pseudomonadota</taxon>
        <taxon>Gammaproteobacteria</taxon>
        <taxon>Enterobacterales</taxon>
        <taxon>Enterobacteriaceae</taxon>
        <taxon>Shigella</taxon>
    </lineage>
</organism>
<gene>
    <name evidence="1" type="primary">kdsA</name>
    <name type="ordered locus">SSON_1963</name>
</gene>
<keyword id="KW-0963">Cytoplasm</keyword>
<keyword id="KW-0448">Lipopolysaccharide biosynthesis</keyword>
<keyword id="KW-1185">Reference proteome</keyword>
<keyword id="KW-0808">Transferase</keyword>
<dbReference type="EC" id="2.5.1.55" evidence="1"/>
<dbReference type="EMBL" id="CP000038">
    <property type="protein sequence ID" value="AAZ88630.1"/>
    <property type="molecule type" value="Genomic_DNA"/>
</dbReference>
<dbReference type="RefSeq" id="WP_000811065.1">
    <property type="nucleotide sequence ID" value="NC_007384.1"/>
</dbReference>
<dbReference type="SMR" id="Q3Z0T2"/>
<dbReference type="GeneID" id="75203328"/>
<dbReference type="KEGG" id="ssn:SSON_1963"/>
<dbReference type="HOGENOM" id="CLU_036666_0_0_6"/>
<dbReference type="UniPathway" id="UPA00030"/>
<dbReference type="UniPathway" id="UPA00357">
    <property type="reaction ID" value="UER00474"/>
</dbReference>
<dbReference type="Proteomes" id="UP000002529">
    <property type="component" value="Chromosome"/>
</dbReference>
<dbReference type="GO" id="GO:0005737">
    <property type="term" value="C:cytoplasm"/>
    <property type="evidence" value="ECO:0007669"/>
    <property type="project" value="UniProtKB-SubCell"/>
</dbReference>
<dbReference type="GO" id="GO:0008676">
    <property type="term" value="F:3-deoxy-8-phosphooctulonate synthase activity"/>
    <property type="evidence" value="ECO:0007669"/>
    <property type="project" value="UniProtKB-UniRule"/>
</dbReference>
<dbReference type="GO" id="GO:0019294">
    <property type="term" value="P:keto-3-deoxy-D-manno-octulosonic acid biosynthetic process"/>
    <property type="evidence" value="ECO:0007669"/>
    <property type="project" value="UniProtKB-UniRule"/>
</dbReference>
<dbReference type="FunFam" id="3.20.20.70:FF:000058">
    <property type="entry name" value="2-dehydro-3-deoxyphosphooctonate aldolase"/>
    <property type="match status" value="1"/>
</dbReference>
<dbReference type="Gene3D" id="3.20.20.70">
    <property type="entry name" value="Aldolase class I"/>
    <property type="match status" value="1"/>
</dbReference>
<dbReference type="HAMAP" id="MF_00056">
    <property type="entry name" value="KDO8P_synth"/>
    <property type="match status" value="1"/>
</dbReference>
<dbReference type="InterPro" id="IPR013785">
    <property type="entry name" value="Aldolase_TIM"/>
</dbReference>
<dbReference type="InterPro" id="IPR006218">
    <property type="entry name" value="DAHP1/KDSA"/>
</dbReference>
<dbReference type="InterPro" id="IPR006269">
    <property type="entry name" value="KDO8P_synthase"/>
</dbReference>
<dbReference type="NCBIfam" id="TIGR01362">
    <property type="entry name" value="KDO8P_synth"/>
    <property type="match status" value="1"/>
</dbReference>
<dbReference type="NCBIfam" id="NF003543">
    <property type="entry name" value="PRK05198.1"/>
    <property type="match status" value="1"/>
</dbReference>
<dbReference type="NCBIfam" id="NF009109">
    <property type="entry name" value="PRK12457.1"/>
    <property type="match status" value="1"/>
</dbReference>
<dbReference type="PANTHER" id="PTHR21057">
    <property type="entry name" value="PHOSPHO-2-DEHYDRO-3-DEOXYHEPTONATE ALDOLASE"/>
    <property type="match status" value="1"/>
</dbReference>
<dbReference type="Pfam" id="PF00793">
    <property type="entry name" value="DAHP_synth_1"/>
    <property type="match status" value="1"/>
</dbReference>
<dbReference type="SUPFAM" id="SSF51569">
    <property type="entry name" value="Aldolase"/>
    <property type="match status" value="1"/>
</dbReference>
<protein>
    <recommendedName>
        <fullName evidence="1">2-dehydro-3-deoxyphosphooctonate aldolase</fullName>
        <ecNumber evidence="1">2.5.1.55</ecNumber>
    </recommendedName>
    <alternativeName>
        <fullName evidence="1">3-deoxy-D-manno-octulosonic acid 8-phosphate synthase</fullName>
    </alternativeName>
    <alternativeName>
        <fullName evidence="1">KDO-8-phosphate synthase</fullName>
        <shortName evidence="1">KDO 8-P synthase</shortName>
        <shortName evidence="1">KDOPS</shortName>
    </alternativeName>
    <alternativeName>
        <fullName evidence="1">Phospho-2-dehydro-3-deoxyoctonate aldolase</fullName>
    </alternativeName>
</protein>
<proteinExistence type="inferred from homology"/>